<reference key="1">
    <citation type="journal article" date="2004" name="Science">
        <title>The 1.2-megabase genome sequence of Mimivirus.</title>
        <authorList>
            <person name="Raoult D."/>
            <person name="Audic S."/>
            <person name="Robert C."/>
            <person name="Abergel C."/>
            <person name="Renesto P."/>
            <person name="Ogata H."/>
            <person name="La Scola B."/>
            <person name="Susan M."/>
            <person name="Claverie J.-M."/>
        </authorList>
    </citation>
    <scope>NUCLEOTIDE SEQUENCE [LARGE SCALE GENOMIC DNA]</scope>
    <source>
        <strain>Rowbotham-Bradford</strain>
    </source>
</reference>
<name>YL105_MIMIV</name>
<organismHost>
    <name type="scientific">Acanthamoeba polyphaga</name>
    <name type="common">Amoeba</name>
    <dbReference type="NCBI Taxonomy" id="5757"/>
</organismHost>
<organism>
    <name type="scientific">Acanthamoeba polyphaga mimivirus</name>
    <name type="common">APMV</name>
    <dbReference type="NCBI Taxonomy" id="212035"/>
    <lineage>
        <taxon>Viruses</taxon>
        <taxon>Varidnaviria</taxon>
        <taxon>Bamfordvirae</taxon>
        <taxon>Nucleocytoviricota</taxon>
        <taxon>Megaviricetes</taxon>
        <taxon>Imitervirales</taxon>
        <taxon>Mimiviridae</taxon>
        <taxon>Megamimivirinae</taxon>
        <taxon>Mimivirus</taxon>
        <taxon>Mimivirus bradfordmassiliense</taxon>
    </lineage>
</organism>
<dbReference type="EMBL" id="AY653733">
    <property type="protein sequence ID" value="AAV50380.1"/>
    <property type="molecule type" value="Genomic_DNA"/>
</dbReference>
<dbReference type="SMR" id="Q5UPH9"/>
<dbReference type="KEGG" id="vg:9924703"/>
<dbReference type="OrthoDB" id="36924at10239"/>
<dbReference type="Proteomes" id="UP000001134">
    <property type="component" value="Genome"/>
</dbReference>
<protein>
    <recommendedName>
        <fullName>Uncharacterized protein L105</fullName>
    </recommendedName>
</protein>
<feature type="chain" id="PRO_0000071209" description="Uncharacterized protein L105">
    <location>
        <begin position="1"/>
        <end position="134"/>
    </location>
</feature>
<sequence>MNSTIIDDPIVTIKTLSKQFQTRYSTIENCNELTKLIDKSTNCITGLTNDEFIEVLLNYLRNNYSEEDLIKFANDFKLLGINIEMDGYVFVNIGGKIFFLSKNFLTHNFNYFESFFKNYQQCDPDYSADHLKDM</sequence>
<gene>
    <name type="ordered locus">MIMI_L105</name>
</gene>
<accession>Q5UPH9</accession>
<keyword id="KW-1185">Reference proteome</keyword>
<proteinExistence type="predicted"/>